<feature type="chain" id="PRO_1000015222" description="S-adenosylmethionine:tRNA ribosyltransferase-isomerase">
    <location>
        <begin position="1"/>
        <end position="345"/>
    </location>
</feature>
<name>QUEA_HELAH</name>
<organism>
    <name type="scientific">Helicobacter acinonychis (strain Sheeba)</name>
    <dbReference type="NCBI Taxonomy" id="382638"/>
    <lineage>
        <taxon>Bacteria</taxon>
        <taxon>Pseudomonadati</taxon>
        <taxon>Campylobacterota</taxon>
        <taxon>Epsilonproteobacteria</taxon>
        <taxon>Campylobacterales</taxon>
        <taxon>Helicobacteraceae</taxon>
        <taxon>Helicobacter</taxon>
    </lineage>
</organism>
<dbReference type="EC" id="2.4.99.17" evidence="1"/>
<dbReference type="EMBL" id="AM260522">
    <property type="protein sequence ID" value="CAJ99932.1"/>
    <property type="molecule type" value="Genomic_DNA"/>
</dbReference>
<dbReference type="RefSeq" id="WP_011578039.1">
    <property type="nucleotide sequence ID" value="NC_008229.1"/>
</dbReference>
<dbReference type="SMR" id="Q17WP4"/>
<dbReference type="STRING" id="382638.Hac_1173"/>
<dbReference type="GeneID" id="31758524"/>
<dbReference type="KEGG" id="hac:Hac_1173"/>
<dbReference type="eggNOG" id="COG0809">
    <property type="taxonomic scope" value="Bacteria"/>
</dbReference>
<dbReference type="HOGENOM" id="CLU_039110_1_0_7"/>
<dbReference type="OrthoDB" id="9805933at2"/>
<dbReference type="BioCyc" id="HACI382638:HAC_RS05060-MONOMER"/>
<dbReference type="UniPathway" id="UPA00392"/>
<dbReference type="Proteomes" id="UP000000775">
    <property type="component" value="Chromosome"/>
</dbReference>
<dbReference type="GO" id="GO:0005737">
    <property type="term" value="C:cytoplasm"/>
    <property type="evidence" value="ECO:0007669"/>
    <property type="project" value="UniProtKB-SubCell"/>
</dbReference>
<dbReference type="GO" id="GO:0051075">
    <property type="term" value="F:S-adenosylmethionine:tRNA ribosyltransferase-isomerase activity"/>
    <property type="evidence" value="ECO:0007669"/>
    <property type="project" value="UniProtKB-EC"/>
</dbReference>
<dbReference type="GO" id="GO:0008616">
    <property type="term" value="P:queuosine biosynthetic process"/>
    <property type="evidence" value="ECO:0007669"/>
    <property type="project" value="UniProtKB-UniRule"/>
</dbReference>
<dbReference type="GO" id="GO:0002099">
    <property type="term" value="P:tRNA wobble guanine modification"/>
    <property type="evidence" value="ECO:0007669"/>
    <property type="project" value="TreeGrafter"/>
</dbReference>
<dbReference type="Gene3D" id="2.40.10.240">
    <property type="entry name" value="QueA-like"/>
    <property type="match status" value="1"/>
</dbReference>
<dbReference type="Gene3D" id="3.40.1780.10">
    <property type="entry name" value="QueA-like"/>
    <property type="match status" value="1"/>
</dbReference>
<dbReference type="HAMAP" id="MF_00113">
    <property type="entry name" value="QueA"/>
    <property type="match status" value="1"/>
</dbReference>
<dbReference type="InterPro" id="IPR003699">
    <property type="entry name" value="QueA"/>
</dbReference>
<dbReference type="InterPro" id="IPR042118">
    <property type="entry name" value="QueA_dom1"/>
</dbReference>
<dbReference type="InterPro" id="IPR042119">
    <property type="entry name" value="QueA_dom2"/>
</dbReference>
<dbReference type="InterPro" id="IPR036100">
    <property type="entry name" value="QueA_sf"/>
</dbReference>
<dbReference type="NCBIfam" id="NF001140">
    <property type="entry name" value="PRK00147.1"/>
    <property type="match status" value="1"/>
</dbReference>
<dbReference type="NCBIfam" id="TIGR00113">
    <property type="entry name" value="queA"/>
    <property type="match status" value="1"/>
</dbReference>
<dbReference type="PANTHER" id="PTHR30307">
    <property type="entry name" value="S-ADENOSYLMETHIONINE:TRNA RIBOSYLTRANSFERASE-ISOMERASE"/>
    <property type="match status" value="1"/>
</dbReference>
<dbReference type="PANTHER" id="PTHR30307:SF0">
    <property type="entry name" value="S-ADENOSYLMETHIONINE:TRNA RIBOSYLTRANSFERASE-ISOMERASE"/>
    <property type="match status" value="1"/>
</dbReference>
<dbReference type="Pfam" id="PF02547">
    <property type="entry name" value="Queuosine_synth"/>
    <property type="match status" value="1"/>
</dbReference>
<dbReference type="SUPFAM" id="SSF111337">
    <property type="entry name" value="QueA-like"/>
    <property type="match status" value="1"/>
</dbReference>
<protein>
    <recommendedName>
        <fullName evidence="1">S-adenosylmethionine:tRNA ribosyltransferase-isomerase</fullName>
        <ecNumber evidence="1">2.4.99.17</ecNumber>
    </recommendedName>
    <alternativeName>
        <fullName evidence="1">Queuosine biosynthesis protein QueA</fullName>
    </alternativeName>
</protein>
<accession>Q17WP4</accession>
<reference key="1">
    <citation type="journal article" date="2006" name="PLoS Genet.">
        <title>Who ate whom? Adaptive Helicobacter genomic changes that accompanied a host jump from early humans to large felines.</title>
        <authorList>
            <person name="Eppinger M."/>
            <person name="Baar C."/>
            <person name="Linz B."/>
            <person name="Raddatz G."/>
            <person name="Lanz C."/>
            <person name="Keller H."/>
            <person name="Morelli G."/>
            <person name="Gressmann H."/>
            <person name="Achtman M."/>
            <person name="Schuster S.C."/>
        </authorList>
    </citation>
    <scope>NUCLEOTIDE SEQUENCE [LARGE SCALE GENOMIC DNA]</scope>
    <source>
        <strain>Sheeba</strain>
    </source>
</reference>
<proteinExistence type="inferred from homology"/>
<keyword id="KW-0963">Cytoplasm</keyword>
<keyword id="KW-0671">Queuosine biosynthesis</keyword>
<keyword id="KW-0949">S-adenosyl-L-methionine</keyword>
<keyword id="KW-0808">Transferase</keyword>
<evidence type="ECO:0000255" key="1">
    <source>
        <dbReference type="HAMAP-Rule" id="MF_00113"/>
    </source>
</evidence>
<comment type="function">
    <text evidence="1">Transfers and isomerizes the ribose moiety from AdoMet to the 7-aminomethyl group of 7-deazaguanine (preQ1-tRNA) to give epoxyqueuosine (oQ-tRNA).</text>
</comment>
<comment type="catalytic activity">
    <reaction evidence="1">
        <text>7-aminomethyl-7-carbaguanosine(34) in tRNA + S-adenosyl-L-methionine = epoxyqueuosine(34) in tRNA + adenine + L-methionine + 2 H(+)</text>
        <dbReference type="Rhea" id="RHEA:32155"/>
        <dbReference type="Rhea" id="RHEA-COMP:10342"/>
        <dbReference type="Rhea" id="RHEA-COMP:18582"/>
        <dbReference type="ChEBI" id="CHEBI:15378"/>
        <dbReference type="ChEBI" id="CHEBI:16708"/>
        <dbReference type="ChEBI" id="CHEBI:57844"/>
        <dbReference type="ChEBI" id="CHEBI:59789"/>
        <dbReference type="ChEBI" id="CHEBI:82833"/>
        <dbReference type="ChEBI" id="CHEBI:194443"/>
        <dbReference type="EC" id="2.4.99.17"/>
    </reaction>
</comment>
<comment type="pathway">
    <text evidence="1">tRNA modification; tRNA-queuosine biosynthesis.</text>
</comment>
<comment type="subunit">
    <text evidence="1">Monomer.</text>
</comment>
<comment type="subcellular location">
    <subcellularLocation>
        <location evidence="1">Cytoplasm</location>
    </subcellularLocation>
</comment>
<comment type="similarity">
    <text evidence="1">Belongs to the QueA family.</text>
</comment>
<gene>
    <name evidence="1" type="primary">queA</name>
    <name type="ordered locus">Hac_1173</name>
</gene>
<sequence length="345" mass="39890">MKEFDLESYDYHLPKELIANYPILPKEKAKLLIYERHSQKITHTTFEHVLDFFPKNTLVVLNDTKVIKARLFGSKYAFLPSKTTEVFFHRFLKNNTALTQIKGKIKVGDKIFFDENHYAEVLELLNNGQRLIAFYDNKTPLDQASILKLLEQYGHMPLPPYIKRADESLDTLEYQSVFAKHIGAVAAPTASLHFSQNTLENLLKDFKHTFLTLHVGAGTFASVETKDIREHQIHTEVLHIPKKSQEILQKSQEILCIGTTALRSVEYFKRLKTPKQEAFECDIFLHLANPIQHANYLLTNFHLPKSSLLMLVSAMIGLEKTKEIYQIAIEKKYRFYSYGDGMLIL</sequence>